<dbReference type="EMBL" id="S62027">
    <property type="protein sequence ID" value="AAB26896.1"/>
    <property type="molecule type" value="mRNA"/>
</dbReference>
<dbReference type="EMBL" id="S62026">
    <property type="protein sequence ID" value="AAD13931.1"/>
    <property type="molecule type" value="Genomic_DNA"/>
</dbReference>
<dbReference type="EMBL" id="U41492">
    <property type="protein sequence ID" value="AAB92386.1"/>
    <property type="molecule type" value="Genomic_DNA"/>
</dbReference>
<dbReference type="EMBL" id="U41493">
    <property type="protein sequence ID" value="AAB92387.1"/>
    <property type="molecule type" value="Genomic_DNA"/>
</dbReference>
<dbReference type="EMBL" id="AF493869">
    <property type="protein sequence ID" value="AAM12583.1"/>
    <property type="molecule type" value="mRNA"/>
</dbReference>
<dbReference type="EMBL" id="CR456912">
    <property type="protein sequence ID" value="CAG33193.1"/>
    <property type="molecule type" value="mRNA"/>
</dbReference>
<dbReference type="EMBL" id="AC002076">
    <property type="protein sequence ID" value="AAS02021.1"/>
    <property type="molecule type" value="Genomic_DNA"/>
</dbReference>
<dbReference type="EMBL" id="CH236949">
    <property type="protein sequence ID" value="EAL24139.1"/>
    <property type="molecule type" value="Genomic_DNA"/>
</dbReference>
<dbReference type="EMBL" id="CH471091">
    <property type="protein sequence ID" value="EAW76806.1"/>
    <property type="molecule type" value="Genomic_DNA"/>
</dbReference>
<dbReference type="EMBL" id="BC029367">
    <property type="protein sequence ID" value="AAH29367.1"/>
    <property type="molecule type" value="mRNA"/>
</dbReference>
<dbReference type="CCDS" id="CCDS5633.1"/>
<dbReference type="PIR" id="I62760">
    <property type="entry name" value="I62760"/>
</dbReference>
<dbReference type="RefSeq" id="NP_001316355.1">
    <property type="nucleotide sequence ID" value="NM_001329426.2"/>
</dbReference>
<dbReference type="RefSeq" id="NP_068774.1">
    <property type="nucleotide sequence ID" value="NM_021955.5"/>
</dbReference>
<dbReference type="PDB" id="7L0P">
    <property type="method" value="EM"/>
    <property type="resolution" value="4.10 A"/>
    <property type="chains" value="G=2-74"/>
</dbReference>
<dbReference type="PDB" id="7L0Q">
    <property type="method" value="EM"/>
    <property type="resolution" value="4.30 A"/>
    <property type="chains" value="G=2-74"/>
</dbReference>
<dbReference type="PDB" id="7L0R">
    <property type="method" value="EM"/>
    <property type="resolution" value="4.20 A"/>
    <property type="chains" value="G=2-74"/>
</dbReference>
<dbReference type="PDB" id="7L0S">
    <property type="method" value="EM"/>
    <property type="resolution" value="4.50 A"/>
    <property type="chains" value="G=2-74"/>
</dbReference>
<dbReference type="PDBsum" id="7L0P"/>
<dbReference type="PDBsum" id="7L0Q"/>
<dbReference type="PDBsum" id="7L0R"/>
<dbReference type="PDBsum" id="7L0S"/>
<dbReference type="EMDB" id="EMD-23099"/>
<dbReference type="EMDB" id="EMD-23100"/>
<dbReference type="EMDB" id="EMD-23101"/>
<dbReference type="EMDB" id="EMD-23102"/>
<dbReference type="SMR" id="P63211"/>
<dbReference type="BioGRID" id="109054">
    <property type="interactions" value="21"/>
</dbReference>
<dbReference type="ComplexPortal" id="CPX-8432">
    <property type="entry name" value="GPR88-Gi1 signaling complex"/>
</dbReference>
<dbReference type="CORUM" id="P63211"/>
<dbReference type="DIP" id="DIP-471N"/>
<dbReference type="FunCoup" id="P63211">
    <property type="interactions" value="1219"/>
</dbReference>
<dbReference type="IntAct" id="P63211">
    <property type="interactions" value="23"/>
</dbReference>
<dbReference type="STRING" id="9606.ENSP00000248572"/>
<dbReference type="iPTMnet" id="P63211"/>
<dbReference type="PhosphoSitePlus" id="P63211"/>
<dbReference type="BioMuta" id="GNGT1"/>
<dbReference type="DMDM" id="52783592"/>
<dbReference type="MassIVE" id="P63211"/>
<dbReference type="PaxDb" id="9606-ENSP00000248572"/>
<dbReference type="PeptideAtlas" id="P63211"/>
<dbReference type="ProteomicsDB" id="57506"/>
<dbReference type="Antibodypedia" id="30066">
    <property type="antibodies" value="88 antibodies from 22 providers"/>
</dbReference>
<dbReference type="DNASU" id="2792"/>
<dbReference type="Ensembl" id="ENST00000248572.10">
    <property type="protein sequence ID" value="ENSP00000248572.5"/>
    <property type="gene ID" value="ENSG00000127928.13"/>
</dbReference>
<dbReference type="Ensembl" id="ENST00000429473.1">
    <property type="protein sequence ID" value="ENSP00000388777.1"/>
    <property type="gene ID" value="ENSG00000127928.13"/>
</dbReference>
<dbReference type="GeneID" id="2792"/>
<dbReference type="KEGG" id="hsa:2792"/>
<dbReference type="MANE-Select" id="ENST00000248572.10">
    <property type="protein sequence ID" value="ENSP00000248572.5"/>
    <property type="RefSeq nucleotide sequence ID" value="NM_021955.5"/>
    <property type="RefSeq protein sequence ID" value="NP_068774.1"/>
</dbReference>
<dbReference type="UCSC" id="uc003unc.2">
    <property type="organism name" value="human"/>
</dbReference>
<dbReference type="AGR" id="HGNC:4411"/>
<dbReference type="CTD" id="2792"/>
<dbReference type="DisGeNET" id="2792"/>
<dbReference type="GeneCards" id="GNGT1"/>
<dbReference type="HGNC" id="HGNC:4411">
    <property type="gene designation" value="GNGT1"/>
</dbReference>
<dbReference type="HPA" id="ENSG00000127928">
    <property type="expression patterns" value="Tissue enriched (retina)"/>
</dbReference>
<dbReference type="MalaCards" id="GNGT1"/>
<dbReference type="MIM" id="189970">
    <property type="type" value="gene"/>
</dbReference>
<dbReference type="neXtProt" id="NX_P63211"/>
<dbReference type="OpenTargets" id="ENSG00000127928"/>
<dbReference type="PharmGKB" id="PA28790"/>
<dbReference type="VEuPathDB" id="HostDB:ENSG00000127928"/>
<dbReference type="eggNOG" id="KOG4119">
    <property type="taxonomic scope" value="Eukaryota"/>
</dbReference>
<dbReference type="GeneTree" id="ENSGT01100000263525"/>
<dbReference type="HOGENOM" id="CLU_168377_2_0_1"/>
<dbReference type="InParanoid" id="P63211"/>
<dbReference type="OMA" id="CEEVMEY"/>
<dbReference type="OrthoDB" id="9933679at2759"/>
<dbReference type="PAN-GO" id="P63211">
    <property type="GO annotations" value="3 GO annotations based on evolutionary models"/>
</dbReference>
<dbReference type="PhylomeDB" id="P63211"/>
<dbReference type="TreeFam" id="TF319909"/>
<dbReference type="PathwayCommons" id="P63211"/>
<dbReference type="Reactome" id="R-HSA-1296041">
    <property type="pathway name" value="Activation of G protein gated Potassium channels"/>
</dbReference>
<dbReference type="Reactome" id="R-HSA-202040">
    <property type="pathway name" value="G-protein activation"/>
</dbReference>
<dbReference type="Reactome" id="R-HSA-2485179">
    <property type="pathway name" value="Activation of the phototransduction cascade"/>
</dbReference>
<dbReference type="Reactome" id="R-HSA-2514859">
    <property type="pathway name" value="Inactivation, recovery and regulation of the phototransduction cascade"/>
</dbReference>
<dbReference type="Reactome" id="R-HSA-381676">
    <property type="pathway name" value="Glucagon-like Peptide-1 (GLP1) regulates insulin secretion"/>
</dbReference>
<dbReference type="Reactome" id="R-HSA-392170">
    <property type="pathway name" value="ADP signalling through P2Y purinoceptor 12"/>
</dbReference>
<dbReference type="Reactome" id="R-HSA-392451">
    <property type="pathway name" value="G beta:gamma signalling through PI3Kgamma"/>
</dbReference>
<dbReference type="Reactome" id="R-HSA-392851">
    <property type="pathway name" value="Prostacyclin signalling through prostacyclin receptor"/>
</dbReference>
<dbReference type="Reactome" id="R-HSA-400042">
    <property type="pathway name" value="Adrenaline,noradrenaline inhibits insulin secretion"/>
</dbReference>
<dbReference type="Reactome" id="R-HSA-4086398">
    <property type="pathway name" value="Ca2+ pathway"/>
</dbReference>
<dbReference type="Reactome" id="R-HSA-416476">
    <property type="pathway name" value="G alpha (q) signalling events"/>
</dbReference>
<dbReference type="Reactome" id="R-HSA-416482">
    <property type="pathway name" value="G alpha (12/13) signalling events"/>
</dbReference>
<dbReference type="Reactome" id="R-HSA-418217">
    <property type="pathway name" value="G beta:gamma signalling through PLC beta"/>
</dbReference>
<dbReference type="Reactome" id="R-HSA-418555">
    <property type="pathway name" value="G alpha (s) signalling events"/>
</dbReference>
<dbReference type="Reactome" id="R-HSA-418592">
    <property type="pathway name" value="ADP signalling through P2Y purinoceptor 1"/>
</dbReference>
<dbReference type="Reactome" id="R-HSA-418594">
    <property type="pathway name" value="G alpha (i) signalling events"/>
</dbReference>
<dbReference type="Reactome" id="R-HSA-418597">
    <property type="pathway name" value="G alpha (z) signalling events"/>
</dbReference>
<dbReference type="Reactome" id="R-HSA-420092">
    <property type="pathway name" value="Glucagon-type ligand receptors"/>
</dbReference>
<dbReference type="Reactome" id="R-HSA-428930">
    <property type="pathway name" value="Thromboxane signalling through TP receptor"/>
</dbReference>
<dbReference type="Reactome" id="R-HSA-432040">
    <property type="pathway name" value="Vasopressin regulates renal water homeostasis via Aquaporins"/>
</dbReference>
<dbReference type="Reactome" id="R-HSA-456926">
    <property type="pathway name" value="Thrombin signalling through proteinase activated receptors (PARs)"/>
</dbReference>
<dbReference type="Reactome" id="R-HSA-500657">
    <property type="pathway name" value="Presynaptic function of Kainate receptors"/>
</dbReference>
<dbReference type="Reactome" id="R-HSA-6814122">
    <property type="pathway name" value="Cooperation of PDCL (PhLP1) and TRiC/CCT in G-protein beta folding"/>
</dbReference>
<dbReference type="Reactome" id="R-HSA-8964315">
    <property type="pathway name" value="G beta:gamma signalling through BTK"/>
</dbReference>
<dbReference type="Reactome" id="R-HSA-8964616">
    <property type="pathway name" value="G beta:gamma signalling through CDC42"/>
</dbReference>
<dbReference type="Reactome" id="R-HSA-9009391">
    <property type="pathway name" value="Extra-nuclear estrogen signaling"/>
</dbReference>
<dbReference type="Reactome" id="R-HSA-9634597">
    <property type="pathway name" value="GPER1 signaling"/>
</dbReference>
<dbReference type="Reactome" id="R-HSA-9660821">
    <property type="pathway name" value="ADORA2B mediated anti-inflammatory cytokines production"/>
</dbReference>
<dbReference type="Reactome" id="R-HSA-9856530">
    <property type="pathway name" value="High laminar flow shear stress activates signaling by PIEZO1 and PECAM1:CDH5:KDR in endothelial cells"/>
</dbReference>
<dbReference type="Reactome" id="R-HSA-997272">
    <property type="pathway name" value="Inhibition of voltage gated Ca2+ channels via Gbeta/gamma subunits"/>
</dbReference>
<dbReference type="SignaLink" id="P63211"/>
<dbReference type="SIGNOR" id="P63211"/>
<dbReference type="BioGRID-ORCS" id="2792">
    <property type="hits" value="16 hits in 1112 CRISPR screens"/>
</dbReference>
<dbReference type="ChiTaRS" id="GNGT1">
    <property type="organism name" value="human"/>
</dbReference>
<dbReference type="GeneWiki" id="GNGT1"/>
<dbReference type="GenomeRNAi" id="2792"/>
<dbReference type="Pharos" id="P63211">
    <property type="development level" value="Tbio"/>
</dbReference>
<dbReference type="PRO" id="PR:P63211"/>
<dbReference type="Proteomes" id="UP000005640">
    <property type="component" value="Chromosome 7"/>
</dbReference>
<dbReference type="RNAct" id="P63211">
    <property type="molecule type" value="protein"/>
</dbReference>
<dbReference type="Bgee" id="ENSG00000127928">
    <property type="expression patterns" value="Expressed in pigmented layer of retina and 45 other cell types or tissues"/>
</dbReference>
<dbReference type="ExpressionAtlas" id="P63211">
    <property type="expression patterns" value="baseline and differential"/>
</dbReference>
<dbReference type="GO" id="GO:0005834">
    <property type="term" value="C:heterotrimeric G-protein complex"/>
    <property type="evidence" value="ECO:0000318"/>
    <property type="project" value="GO_Central"/>
</dbReference>
<dbReference type="GO" id="GO:0097381">
    <property type="term" value="C:photoreceptor disc membrane"/>
    <property type="evidence" value="ECO:0000304"/>
    <property type="project" value="Reactome"/>
</dbReference>
<dbReference type="GO" id="GO:0001917">
    <property type="term" value="C:photoreceptor inner segment"/>
    <property type="evidence" value="ECO:0007669"/>
    <property type="project" value="Ensembl"/>
</dbReference>
<dbReference type="GO" id="GO:0031681">
    <property type="term" value="F:G-protein beta-subunit binding"/>
    <property type="evidence" value="ECO:0000318"/>
    <property type="project" value="GO_Central"/>
</dbReference>
<dbReference type="GO" id="GO:0003924">
    <property type="term" value="F:GTPase activity"/>
    <property type="evidence" value="ECO:0000304"/>
    <property type="project" value="ProtInc"/>
</dbReference>
<dbReference type="GO" id="GO:0010659">
    <property type="term" value="P:cardiac muscle cell apoptotic process"/>
    <property type="evidence" value="ECO:0007669"/>
    <property type="project" value="Ensembl"/>
</dbReference>
<dbReference type="GO" id="GO:0071456">
    <property type="term" value="P:cellular response to hypoxia"/>
    <property type="evidence" value="ECO:0007669"/>
    <property type="project" value="Ensembl"/>
</dbReference>
<dbReference type="GO" id="GO:0042462">
    <property type="term" value="P:eye photoreceptor cell development"/>
    <property type="evidence" value="ECO:0007669"/>
    <property type="project" value="Ensembl"/>
</dbReference>
<dbReference type="GO" id="GO:0007186">
    <property type="term" value="P:G protein-coupled receptor signaling pathway"/>
    <property type="evidence" value="ECO:0000318"/>
    <property type="project" value="GO_Central"/>
</dbReference>
<dbReference type="GO" id="GO:0007602">
    <property type="term" value="P:phototransduction"/>
    <property type="evidence" value="ECO:0007669"/>
    <property type="project" value="Ensembl"/>
</dbReference>
<dbReference type="GO" id="GO:0008104">
    <property type="term" value="P:protein localization"/>
    <property type="evidence" value="ECO:0007669"/>
    <property type="project" value="Ensembl"/>
</dbReference>
<dbReference type="GO" id="GO:0007165">
    <property type="term" value="P:signal transduction"/>
    <property type="evidence" value="ECO:0000303"/>
    <property type="project" value="ProtInc"/>
</dbReference>
<dbReference type="CDD" id="cd00068">
    <property type="entry name" value="GGL"/>
    <property type="match status" value="1"/>
</dbReference>
<dbReference type="FunFam" id="4.10.260.10:FF:000001">
    <property type="entry name" value="Guanine nucleotide-binding protein subunit gamma"/>
    <property type="match status" value="1"/>
</dbReference>
<dbReference type="Gene3D" id="4.10.260.10">
    <property type="entry name" value="Transducin (heterotrimeric G protein), gamma chain"/>
    <property type="match status" value="1"/>
</dbReference>
<dbReference type="InterPro" id="IPR015898">
    <property type="entry name" value="G-protein_gamma-like_dom"/>
</dbReference>
<dbReference type="InterPro" id="IPR036284">
    <property type="entry name" value="GGL_sf"/>
</dbReference>
<dbReference type="InterPro" id="IPR001770">
    <property type="entry name" value="Gprotein-gamma"/>
</dbReference>
<dbReference type="PANTHER" id="PTHR13809">
    <property type="entry name" value="GUANINE NUCLEOTIDE-BINDING PROTEIN GAMMA SUBUNIT"/>
    <property type="match status" value="1"/>
</dbReference>
<dbReference type="Pfam" id="PF00631">
    <property type="entry name" value="G-gamma"/>
    <property type="match status" value="1"/>
</dbReference>
<dbReference type="PRINTS" id="PR00321">
    <property type="entry name" value="GPROTEING"/>
</dbReference>
<dbReference type="SMART" id="SM01224">
    <property type="entry name" value="G_gamma"/>
    <property type="match status" value="1"/>
</dbReference>
<dbReference type="SMART" id="SM00224">
    <property type="entry name" value="GGL"/>
    <property type="match status" value="1"/>
</dbReference>
<dbReference type="SUPFAM" id="SSF48670">
    <property type="entry name" value="Transducin (heterotrimeric G protein), gamma chain"/>
    <property type="match status" value="1"/>
</dbReference>
<dbReference type="PROSITE" id="PS50058">
    <property type="entry name" value="G_PROTEIN_GAMMA"/>
    <property type="match status" value="1"/>
</dbReference>
<evidence type="ECO:0000250" key="1">
    <source>
        <dbReference type="UniProtKB" id="P02698"/>
    </source>
</evidence>
<evidence type="ECO:0000305" key="2"/>
<feature type="initiator methionine" description="Removed" evidence="1">
    <location>
        <position position="1"/>
    </location>
</feature>
<feature type="chain" id="PRO_0000012605" description="Guanine nucleotide-binding protein G(T) subunit gamma-T1" evidence="1">
    <location>
        <begin position="2"/>
        <end position="71"/>
    </location>
</feature>
<feature type="propeptide" id="PRO_0000012606" description="Removed in mature form" evidence="1">
    <location>
        <begin position="72"/>
        <end position="74"/>
    </location>
</feature>
<feature type="modified residue" description="Cysteine methyl ester" evidence="1">
    <location>
        <position position="71"/>
    </location>
</feature>
<feature type="lipid moiety-binding region" description="S-farnesyl cysteine" evidence="1">
    <location>
        <position position="71"/>
    </location>
</feature>
<feature type="sequence variant" id="VAR_033949" description="In dbSNP:rs17243826.">
    <original>E</original>
    <variation>K</variation>
    <location>
        <position position="50"/>
    </location>
</feature>
<protein>
    <recommendedName>
        <fullName>Guanine nucleotide-binding protein G(T) subunit gamma-T1</fullName>
    </recommendedName>
    <alternativeName>
        <fullName>Transducin gamma chain</fullName>
    </alternativeName>
</protein>
<gene>
    <name type="primary">GNGT1</name>
</gene>
<organism>
    <name type="scientific">Homo sapiens</name>
    <name type="common">Human</name>
    <dbReference type="NCBI Taxonomy" id="9606"/>
    <lineage>
        <taxon>Eukaryota</taxon>
        <taxon>Metazoa</taxon>
        <taxon>Chordata</taxon>
        <taxon>Craniata</taxon>
        <taxon>Vertebrata</taxon>
        <taxon>Euteleostomi</taxon>
        <taxon>Mammalia</taxon>
        <taxon>Eutheria</taxon>
        <taxon>Euarchontoglires</taxon>
        <taxon>Primates</taxon>
        <taxon>Haplorrhini</taxon>
        <taxon>Catarrhini</taxon>
        <taxon>Hominidae</taxon>
        <taxon>Homo</taxon>
    </lineage>
</organism>
<comment type="function">
    <text>Guanine nucleotide-binding proteins (G proteins) are involved as a modulator or transducer in various transmembrane signaling systems. The beta and gamma chains are required for the GTPase activity, for replacement of GDP by GTP, and for G protein-effector interaction.</text>
</comment>
<comment type="subunit">
    <text>G proteins are composed of 3 units, alpha, beta and gamma.</text>
</comment>
<comment type="interaction">
    <interactant intactId="EBI-10220715">
        <id>P63211</id>
    </interactant>
    <interactant intactId="EBI-739467">
        <id>Q9H8Y8</id>
        <label>GORASP2</label>
    </interactant>
    <organismsDiffer>false</organismsDiffer>
    <experiments>5</experiments>
</comment>
<comment type="interaction">
    <interactant intactId="EBI-10220715">
        <id>P63211</id>
    </interactant>
    <interactant intactId="EBI-7850168">
        <id>Q8NCY6</id>
        <label>MSANTD4</label>
    </interactant>
    <organismsDiffer>false</organismsDiffer>
    <experiments>3</experiments>
</comment>
<comment type="interaction">
    <interactant intactId="EBI-10220715">
        <id>P63211</id>
    </interactant>
    <interactant intactId="EBI-5772890">
        <id>Q13371</id>
        <label>PDCL</label>
    </interactant>
    <organismsDiffer>false</organismsDiffer>
    <experiments>2</experiments>
</comment>
<comment type="interaction">
    <interactant intactId="EBI-10220715">
        <id>P63211</id>
    </interactant>
    <interactant intactId="EBI-723441">
        <id>Q92575</id>
        <label>UBXN4</label>
    </interactant>
    <organismsDiffer>false</organismsDiffer>
    <experiments>3</experiments>
</comment>
<comment type="interaction">
    <interactant intactId="EBI-10220715">
        <id>P63211</id>
    </interactant>
    <interactant intactId="EBI-11995620">
        <id>G5E9M4</id>
        <label>ZNF277</label>
    </interactant>
    <organismsDiffer>false</organismsDiffer>
    <experiments>3</experiments>
</comment>
<comment type="interaction">
    <interactant intactId="EBI-10220715">
        <id>P63211</id>
    </interactant>
    <interactant intactId="EBI-10192794">
        <id>Q8WWA6</id>
        <label>ZNF277</label>
    </interactant>
    <organismsDiffer>false</organismsDiffer>
    <experiments>3</experiments>
</comment>
<comment type="subcellular location">
    <subcellularLocation>
        <location evidence="2">Cell membrane</location>
        <topology evidence="2">Lipid-anchor</topology>
        <orientation evidence="2">Cytoplasmic side</orientation>
    </subcellularLocation>
</comment>
<comment type="tissue specificity">
    <text>Retinal rod outer segment.</text>
</comment>
<comment type="similarity">
    <text evidence="2">Belongs to the G protein gamma family.</text>
</comment>
<reference key="1">
    <citation type="journal article" date="1993" name="Exp. Eye Res.">
        <title>Structure of the bovine transducin gamma subunit gene and analysis of promoter function in transgenic mice.</title>
        <authorList>
            <person name="Tao L."/>
            <person name="Pandey S."/>
            <person name="Simon M.I."/>
            <person name="Fong H.K."/>
        </authorList>
    </citation>
    <scope>NUCLEOTIDE SEQUENCE [GENOMIC DNA / MRNA]</scope>
</reference>
<reference key="2">
    <citation type="journal article" date="1996" name="Genomics">
        <title>Gene structure and chromosome localization to 7q21.3 of the human rod photoreceptor transducin gamma-subunit gene (GNGT1).</title>
        <authorList>
            <person name="Scherer S.W."/>
            <person name="Feinstein D.S."/>
            <person name="Oliveira L."/>
            <person name="Tsui L.-C."/>
            <person name="Pittler S.J."/>
        </authorList>
    </citation>
    <scope>NUCLEOTIDE SEQUENCE [GENOMIC DNA]</scope>
    <source>
        <tissue>Blood</tissue>
    </source>
</reference>
<reference key="3">
    <citation type="submission" date="2002-03" db="EMBL/GenBank/DDBJ databases">
        <title>cDNA clones of human proteins involved in signal transduction sequenced by the Guthrie cDNA resource center (www.cdna.org).</title>
        <authorList>
            <person name="Puhl H.L. III"/>
            <person name="Ikeda S.R."/>
            <person name="Aronstam R.S."/>
        </authorList>
    </citation>
    <scope>NUCLEOTIDE SEQUENCE [LARGE SCALE MRNA]</scope>
</reference>
<reference key="4">
    <citation type="submission" date="2004-06" db="EMBL/GenBank/DDBJ databases">
        <title>Cloning of human full open reading frames in Gateway(TM) system entry vector (pDONR201).</title>
        <authorList>
            <person name="Ebert L."/>
            <person name="Schick M."/>
            <person name="Neubert P."/>
            <person name="Schatten R."/>
            <person name="Henze S."/>
            <person name="Korn B."/>
        </authorList>
    </citation>
    <scope>NUCLEOTIDE SEQUENCE [LARGE SCALE MRNA]</scope>
</reference>
<reference key="5">
    <citation type="journal article" date="2003" name="Science">
        <title>Human chromosome 7: DNA sequence and biology.</title>
        <authorList>
            <person name="Scherer S.W."/>
            <person name="Cheung J."/>
            <person name="MacDonald J.R."/>
            <person name="Osborne L.R."/>
            <person name="Nakabayashi K."/>
            <person name="Herbrick J.-A."/>
            <person name="Carson A.R."/>
            <person name="Parker-Katiraee L."/>
            <person name="Skaug J."/>
            <person name="Khaja R."/>
            <person name="Zhang J."/>
            <person name="Hudek A.K."/>
            <person name="Li M."/>
            <person name="Haddad M."/>
            <person name="Duggan G.E."/>
            <person name="Fernandez B.A."/>
            <person name="Kanematsu E."/>
            <person name="Gentles S."/>
            <person name="Christopoulos C.C."/>
            <person name="Choufani S."/>
            <person name="Kwasnicka D."/>
            <person name="Zheng X.H."/>
            <person name="Lai Z."/>
            <person name="Nusskern D.R."/>
            <person name="Zhang Q."/>
            <person name="Gu Z."/>
            <person name="Lu F."/>
            <person name="Zeesman S."/>
            <person name="Nowaczyk M.J."/>
            <person name="Teshima I."/>
            <person name="Chitayat D."/>
            <person name="Shuman C."/>
            <person name="Weksberg R."/>
            <person name="Zackai E.H."/>
            <person name="Grebe T.A."/>
            <person name="Cox S.R."/>
            <person name="Kirkpatrick S.J."/>
            <person name="Rahman N."/>
            <person name="Friedman J.M."/>
            <person name="Heng H.H.Q."/>
            <person name="Pelicci P.G."/>
            <person name="Lo-Coco F."/>
            <person name="Belloni E."/>
            <person name="Shaffer L.G."/>
            <person name="Pober B."/>
            <person name="Morton C.C."/>
            <person name="Gusella J.F."/>
            <person name="Bruns G.A.P."/>
            <person name="Korf B.R."/>
            <person name="Quade B.J."/>
            <person name="Ligon A.H."/>
            <person name="Ferguson H."/>
            <person name="Higgins A.W."/>
            <person name="Leach N.T."/>
            <person name="Herrick S.R."/>
            <person name="Lemyre E."/>
            <person name="Farra C.G."/>
            <person name="Kim H.-G."/>
            <person name="Summers A.M."/>
            <person name="Gripp K.W."/>
            <person name="Roberts W."/>
            <person name="Szatmari P."/>
            <person name="Winsor E.J.T."/>
            <person name="Grzeschik K.-H."/>
            <person name="Teebi A."/>
            <person name="Minassian B.A."/>
            <person name="Kere J."/>
            <person name="Armengol L."/>
            <person name="Pujana M.A."/>
            <person name="Estivill X."/>
            <person name="Wilson M.D."/>
            <person name="Koop B.F."/>
            <person name="Tosi S."/>
            <person name="Moore G.E."/>
            <person name="Boright A.P."/>
            <person name="Zlotorynski E."/>
            <person name="Kerem B."/>
            <person name="Kroisel P.M."/>
            <person name="Petek E."/>
            <person name="Oscier D.G."/>
            <person name="Mould S.J."/>
            <person name="Doehner H."/>
            <person name="Doehner K."/>
            <person name="Rommens J.M."/>
            <person name="Vincent J.B."/>
            <person name="Venter J.C."/>
            <person name="Li P.W."/>
            <person name="Mural R.J."/>
            <person name="Adams M.D."/>
            <person name="Tsui L.-C."/>
        </authorList>
    </citation>
    <scope>NUCLEOTIDE SEQUENCE [LARGE SCALE GENOMIC DNA]</scope>
</reference>
<reference key="6">
    <citation type="submission" date="2005-09" db="EMBL/GenBank/DDBJ databases">
        <authorList>
            <person name="Mural R.J."/>
            <person name="Istrail S."/>
            <person name="Sutton G.G."/>
            <person name="Florea L."/>
            <person name="Halpern A.L."/>
            <person name="Mobarry C.M."/>
            <person name="Lippert R."/>
            <person name="Walenz B."/>
            <person name="Shatkay H."/>
            <person name="Dew I."/>
            <person name="Miller J.R."/>
            <person name="Flanigan M.J."/>
            <person name="Edwards N.J."/>
            <person name="Bolanos R."/>
            <person name="Fasulo D."/>
            <person name="Halldorsson B.V."/>
            <person name="Hannenhalli S."/>
            <person name="Turner R."/>
            <person name="Yooseph S."/>
            <person name="Lu F."/>
            <person name="Nusskern D.R."/>
            <person name="Shue B.C."/>
            <person name="Zheng X.H."/>
            <person name="Zhong F."/>
            <person name="Delcher A.L."/>
            <person name="Huson D.H."/>
            <person name="Kravitz S.A."/>
            <person name="Mouchard L."/>
            <person name="Reinert K."/>
            <person name="Remington K.A."/>
            <person name="Clark A.G."/>
            <person name="Waterman M.S."/>
            <person name="Eichler E.E."/>
            <person name="Adams M.D."/>
            <person name="Hunkapiller M.W."/>
            <person name="Myers E.W."/>
            <person name="Venter J.C."/>
        </authorList>
    </citation>
    <scope>NUCLEOTIDE SEQUENCE [LARGE SCALE GENOMIC DNA]</scope>
</reference>
<reference key="7">
    <citation type="journal article" date="2003" name="Nature">
        <title>The DNA sequence of human chromosome 7.</title>
        <authorList>
            <person name="Hillier L.W."/>
            <person name="Fulton R.S."/>
            <person name="Fulton L.A."/>
            <person name="Graves T.A."/>
            <person name="Pepin K.H."/>
            <person name="Wagner-McPherson C."/>
            <person name="Layman D."/>
            <person name="Maas J."/>
            <person name="Jaeger S."/>
            <person name="Walker R."/>
            <person name="Wylie K."/>
            <person name="Sekhon M."/>
            <person name="Becker M.C."/>
            <person name="O'Laughlin M.D."/>
            <person name="Schaller M.E."/>
            <person name="Fewell G.A."/>
            <person name="Delehaunty K.D."/>
            <person name="Miner T.L."/>
            <person name="Nash W.E."/>
            <person name="Cordes M."/>
            <person name="Du H."/>
            <person name="Sun H."/>
            <person name="Edwards J."/>
            <person name="Bradshaw-Cordum H."/>
            <person name="Ali J."/>
            <person name="Andrews S."/>
            <person name="Isak A."/>
            <person name="Vanbrunt A."/>
            <person name="Nguyen C."/>
            <person name="Du F."/>
            <person name="Lamar B."/>
            <person name="Courtney L."/>
            <person name="Kalicki J."/>
            <person name="Ozersky P."/>
            <person name="Bielicki L."/>
            <person name="Scott K."/>
            <person name="Holmes A."/>
            <person name="Harkins R."/>
            <person name="Harris A."/>
            <person name="Strong C.M."/>
            <person name="Hou S."/>
            <person name="Tomlinson C."/>
            <person name="Dauphin-Kohlberg S."/>
            <person name="Kozlowicz-Reilly A."/>
            <person name="Leonard S."/>
            <person name="Rohlfing T."/>
            <person name="Rock S.M."/>
            <person name="Tin-Wollam A.-M."/>
            <person name="Abbott A."/>
            <person name="Minx P."/>
            <person name="Maupin R."/>
            <person name="Strowmatt C."/>
            <person name="Latreille P."/>
            <person name="Miller N."/>
            <person name="Johnson D."/>
            <person name="Murray J."/>
            <person name="Woessner J.P."/>
            <person name="Wendl M.C."/>
            <person name="Yang S.-P."/>
            <person name="Schultz B.R."/>
            <person name="Wallis J.W."/>
            <person name="Spieth J."/>
            <person name="Bieri T.A."/>
            <person name="Nelson J.O."/>
            <person name="Berkowicz N."/>
            <person name="Wohldmann P.E."/>
            <person name="Cook L.L."/>
            <person name="Hickenbotham M.T."/>
            <person name="Eldred J."/>
            <person name="Williams D."/>
            <person name="Bedell J.A."/>
            <person name="Mardis E.R."/>
            <person name="Clifton S.W."/>
            <person name="Chissoe S.L."/>
            <person name="Marra M.A."/>
            <person name="Raymond C."/>
            <person name="Haugen E."/>
            <person name="Gillett W."/>
            <person name="Zhou Y."/>
            <person name="James R."/>
            <person name="Phelps K."/>
            <person name="Iadanoto S."/>
            <person name="Bubb K."/>
            <person name="Simms E."/>
            <person name="Levy R."/>
            <person name="Clendenning J."/>
            <person name="Kaul R."/>
            <person name="Kent W.J."/>
            <person name="Furey T.S."/>
            <person name="Baertsch R.A."/>
            <person name="Brent M.R."/>
            <person name="Keibler E."/>
            <person name="Flicek P."/>
            <person name="Bork P."/>
            <person name="Suyama M."/>
            <person name="Bailey J.A."/>
            <person name="Portnoy M.E."/>
            <person name="Torrents D."/>
            <person name="Chinwalla A.T."/>
            <person name="Gish W.R."/>
            <person name="Eddy S.R."/>
            <person name="McPherson J.D."/>
            <person name="Olson M.V."/>
            <person name="Eichler E.E."/>
            <person name="Green E.D."/>
            <person name="Waterston R.H."/>
            <person name="Wilson R.K."/>
        </authorList>
    </citation>
    <scope>NUCLEOTIDE SEQUENCE [LARGE SCALE GENOMIC DNA]</scope>
</reference>
<reference key="8">
    <citation type="journal article" date="2004" name="Genome Res.">
        <title>The status, quality, and expansion of the NIH full-length cDNA project: the Mammalian Gene Collection (MGC).</title>
        <authorList>
            <consortium name="The MGC Project Team"/>
        </authorList>
    </citation>
    <scope>NUCLEOTIDE SEQUENCE [LARGE SCALE MRNA]</scope>
    <source>
        <tissue>Placenta</tissue>
    </source>
</reference>
<sequence length="74" mass="8496">MPVINIEDLTEKDKLKMEVDQLKKEVTLERMLVSKCCEEVRDYVEERSGEDPLVKGIPEDKNPFKELKGGCVIS</sequence>
<proteinExistence type="evidence at protein level"/>
<keyword id="KW-0002">3D-structure</keyword>
<keyword id="KW-1003">Cell membrane</keyword>
<keyword id="KW-0449">Lipoprotein</keyword>
<keyword id="KW-0472">Membrane</keyword>
<keyword id="KW-0488">Methylation</keyword>
<keyword id="KW-0636">Prenylation</keyword>
<keyword id="KW-1267">Proteomics identification</keyword>
<keyword id="KW-1185">Reference proteome</keyword>
<keyword id="KW-0807">Transducer</keyword>
<accession>P63211</accession>
<accession>A4D1H2</accession>
<accession>O43835</accession>
<accession>Q08447</accession>
<accession>Q16026</accession>
<accession>Q6LCP6</accession>
<name>GBG1_HUMAN</name>